<accession>Q6GZP4</accession>
<organismHost>
    <name type="scientific">Dryophytes versicolor</name>
    <name type="common">chameleon treefrog</name>
    <dbReference type="NCBI Taxonomy" id="30343"/>
</organismHost>
<organismHost>
    <name type="scientific">Lithobates pipiens</name>
    <name type="common">Northern leopard frog</name>
    <name type="synonym">Rana pipiens</name>
    <dbReference type="NCBI Taxonomy" id="8404"/>
</organismHost>
<organismHost>
    <name type="scientific">Lithobates sylvaticus</name>
    <name type="common">Wood frog</name>
    <name type="synonym">Rana sylvatica</name>
    <dbReference type="NCBI Taxonomy" id="45438"/>
</organismHost>
<organismHost>
    <name type="scientific">Notophthalmus viridescens</name>
    <name type="common">Eastern newt</name>
    <name type="synonym">Triturus viridescens</name>
    <dbReference type="NCBI Taxonomy" id="8316"/>
</organismHost>
<proteinExistence type="predicted"/>
<protein>
    <recommendedName>
        <fullName>Putative transcription elongation factor S-II-like protein 81R</fullName>
    </recommendedName>
</protein>
<feature type="chain" id="PRO_0000410584" description="Putative transcription elongation factor S-II-like protein 81R">
    <location>
        <begin position="1"/>
        <end position="92"/>
    </location>
</feature>
<feature type="zinc finger region" description="TFIIS-type" evidence="1">
    <location>
        <begin position="51"/>
        <end position="91"/>
    </location>
</feature>
<feature type="binding site" evidence="1">
    <location>
        <position position="55"/>
    </location>
    <ligand>
        <name>Zn(2+)</name>
        <dbReference type="ChEBI" id="CHEBI:29105"/>
    </ligand>
</feature>
<feature type="binding site" evidence="1">
    <location>
        <position position="58"/>
    </location>
    <ligand>
        <name>Zn(2+)</name>
        <dbReference type="ChEBI" id="CHEBI:29105"/>
    </ligand>
</feature>
<feature type="binding site" evidence="1">
    <location>
        <position position="83"/>
    </location>
    <ligand>
        <name>Zn(2+)</name>
        <dbReference type="ChEBI" id="CHEBI:29105"/>
    </ligand>
</feature>
<feature type="binding site" evidence="1">
    <location>
        <position position="86"/>
    </location>
    <ligand>
        <name>Zn(2+)</name>
        <dbReference type="ChEBI" id="CHEBI:29105"/>
    </ligand>
</feature>
<sequence length="92" mass="10497">MSFQRDYESEWNAALIEEYGEGGSGFSHGRFASLRMCEQRLYRPPGKVEEGTVKCPGCGSRRVHALQRQTRSADEPMTLFAMCSECGKRWTR</sequence>
<keyword id="KW-0251">Elongation factor</keyword>
<keyword id="KW-0479">Metal-binding</keyword>
<keyword id="KW-0648">Protein biosynthesis</keyword>
<keyword id="KW-1185">Reference proteome</keyword>
<keyword id="KW-0862">Zinc</keyword>
<keyword id="KW-0863">Zinc-finger</keyword>
<dbReference type="EMBL" id="AY548484">
    <property type="protein sequence ID" value="AAT09741.1"/>
    <property type="molecule type" value="Genomic_DNA"/>
</dbReference>
<dbReference type="RefSeq" id="YP_031660.1">
    <property type="nucleotide sequence ID" value="NC_005946.1"/>
</dbReference>
<dbReference type="KEGG" id="vg:2947800"/>
<dbReference type="Proteomes" id="UP000008770">
    <property type="component" value="Segment"/>
</dbReference>
<dbReference type="GO" id="GO:0003899">
    <property type="term" value="F:DNA-directed RNA polymerase activity"/>
    <property type="evidence" value="ECO:0007669"/>
    <property type="project" value="InterPro"/>
</dbReference>
<dbReference type="GO" id="GO:0003676">
    <property type="term" value="F:nucleic acid binding"/>
    <property type="evidence" value="ECO:0007669"/>
    <property type="project" value="InterPro"/>
</dbReference>
<dbReference type="GO" id="GO:0008270">
    <property type="term" value="F:zinc ion binding"/>
    <property type="evidence" value="ECO:0007669"/>
    <property type="project" value="UniProtKB-KW"/>
</dbReference>
<dbReference type="GO" id="GO:0006386">
    <property type="term" value="P:termination of RNA polymerase III transcription"/>
    <property type="evidence" value="ECO:0007669"/>
    <property type="project" value="TreeGrafter"/>
</dbReference>
<dbReference type="Gene3D" id="2.20.25.10">
    <property type="match status" value="1"/>
</dbReference>
<dbReference type="InterPro" id="IPR012164">
    <property type="entry name" value="Rpa12/Rpb9/Rpc10/TFS"/>
</dbReference>
<dbReference type="InterPro" id="IPR001222">
    <property type="entry name" value="Znf_TFIIS"/>
</dbReference>
<dbReference type="PANTHER" id="PTHR11239">
    <property type="entry name" value="DNA-DIRECTED RNA POLYMERASE"/>
    <property type="match status" value="1"/>
</dbReference>
<dbReference type="PANTHER" id="PTHR11239:SF12">
    <property type="entry name" value="DNA-DIRECTED RNA POLYMERASE III SUBUNIT RPC10"/>
    <property type="match status" value="1"/>
</dbReference>
<dbReference type="Pfam" id="PF01096">
    <property type="entry name" value="Zn_ribbon_TFIIS"/>
    <property type="match status" value="1"/>
</dbReference>
<dbReference type="SMART" id="SM00440">
    <property type="entry name" value="ZnF_C2C2"/>
    <property type="match status" value="1"/>
</dbReference>
<dbReference type="SUPFAM" id="SSF57783">
    <property type="entry name" value="Zinc beta-ribbon"/>
    <property type="match status" value="1"/>
</dbReference>
<dbReference type="PROSITE" id="PS00466">
    <property type="entry name" value="ZF_TFIIS_1"/>
    <property type="match status" value="1"/>
</dbReference>
<dbReference type="PROSITE" id="PS51133">
    <property type="entry name" value="ZF_TFIIS_2"/>
    <property type="match status" value="1"/>
</dbReference>
<reference key="1">
    <citation type="journal article" date="2004" name="Virology">
        <title>Comparative genomic analyses of frog virus 3, type species of the genus Ranavirus (family Iridoviridae).</title>
        <authorList>
            <person name="Tan W.G."/>
            <person name="Barkman T.J."/>
            <person name="Gregory Chinchar V."/>
            <person name="Essani K."/>
        </authorList>
    </citation>
    <scope>NUCLEOTIDE SEQUENCE [LARGE SCALE GENOMIC DNA]</scope>
</reference>
<organism>
    <name type="scientific">Frog virus 3 (isolate Goorha)</name>
    <name type="common">FV-3</name>
    <dbReference type="NCBI Taxonomy" id="654924"/>
    <lineage>
        <taxon>Viruses</taxon>
        <taxon>Varidnaviria</taxon>
        <taxon>Bamfordvirae</taxon>
        <taxon>Nucleocytoviricota</taxon>
        <taxon>Megaviricetes</taxon>
        <taxon>Pimascovirales</taxon>
        <taxon>Iridoviridae</taxon>
        <taxon>Alphairidovirinae</taxon>
        <taxon>Ranavirus</taxon>
        <taxon>Frog virus 3</taxon>
    </lineage>
</organism>
<evidence type="ECO:0000255" key="1">
    <source>
        <dbReference type="PROSITE-ProRule" id="PRU00472"/>
    </source>
</evidence>
<gene>
    <name type="ORF">FV3-081R</name>
</gene>
<name>081R_FRG3G</name>